<keyword id="KW-0285">Flavoprotein</keyword>
<keyword id="KW-0288">FMN</keyword>
<keyword id="KW-0560">Oxidoreductase</keyword>
<keyword id="KW-0597">Phosphoprotein</keyword>
<keyword id="KW-0663">Pyridoxal phosphate</keyword>
<keyword id="KW-0664">Pyridoxine biosynthesis</keyword>
<keyword id="KW-1185">Reference proteome</keyword>
<reference key="1">
    <citation type="journal article" date="2005" name="BMC Genomics">
        <title>Characterization of 954 bovine full-CDS cDNA sequences.</title>
        <authorList>
            <person name="Harhay G.P."/>
            <person name="Sonstegard T.S."/>
            <person name="Keele J.W."/>
            <person name="Heaton M.P."/>
            <person name="Clawson M.L."/>
            <person name="Snelling W.M."/>
            <person name="Wiedmann R.T."/>
            <person name="Van Tassell C.P."/>
            <person name="Smith T.P.L."/>
        </authorList>
    </citation>
    <scope>NUCLEOTIDE SEQUENCE [LARGE SCALE MRNA]</scope>
</reference>
<reference key="2">
    <citation type="submission" date="2005-08" db="EMBL/GenBank/DDBJ databases">
        <authorList>
            <consortium name="NIH - Mammalian Gene Collection (MGC) project"/>
        </authorList>
    </citation>
    <scope>NUCLEOTIDE SEQUENCE [LARGE SCALE MRNA]</scope>
    <source>
        <strain>Hereford</strain>
        <tissue>Rumen reticulum</tissue>
    </source>
</reference>
<proteinExistence type="evidence at transcript level"/>
<protein>
    <recommendedName>
        <fullName>Pyridoxine-5'-phosphate oxidase</fullName>
        <ecNumber evidence="2">1.4.3.5</ecNumber>
    </recommendedName>
    <alternativeName>
        <fullName>Pyridoxamine-phosphate oxidase</fullName>
    </alternativeName>
</protein>
<dbReference type="EC" id="1.4.3.5" evidence="2"/>
<dbReference type="EMBL" id="BT020917">
    <property type="protein sequence ID" value="AAX08934.1"/>
    <property type="molecule type" value="mRNA"/>
</dbReference>
<dbReference type="EMBL" id="BC103208">
    <property type="protein sequence ID" value="AAI03209.1"/>
    <property type="molecule type" value="mRNA"/>
</dbReference>
<dbReference type="RefSeq" id="NP_001014907.1">
    <property type="nucleotide sequence ID" value="NM_001014907.1"/>
</dbReference>
<dbReference type="SMR" id="Q5E9K3"/>
<dbReference type="FunCoup" id="Q5E9K3">
    <property type="interactions" value="1870"/>
</dbReference>
<dbReference type="STRING" id="9913.ENSBTAP00000016263"/>
<dbReference type="PaxDb" id="9913-ENSBTAP00000016263"/>
<dbReference type="Ensembl" id="ENSBTAT00000016263.4">
    <property type="protein sequence ID" value="ENSBTAP00000016263.3"/>
    <property type="gene ID" value="ENSBTAG00000012259.5"/>
</dbReference>
<dbReference type="GeneID" id="512573"/>
<dbReference type="KEGG" id="bta:512573"/>
<dbReference type="CTD" id="55163"/>
<dbReference type="VEuPathDB" id="HostDB:ENSBTAG00000012259"/>
<dbReference type="VGNC" id="VGNC:33096">
    <property type="gene designation" value="PNPO"/>
</dbReference>
<dbReference type="eggNOG" id="KOG2586">
    <property type="taxonomic scope" value="Eukaryota"/>
</dbReference>
<dbReference type="GeneTree" id="ENSGT00390000011219"/>
<dbReference type="HOGENOM" id="CLU_032263_2_1_1"/>
<dbReference type="InParanoid" id="Q5E9K3"/>
<dbReference type="OMA" id="AYFRTRP"/>
<dbReference type="OrthoDB" id="303614at2759"/>
<dbReference type="TreeFam" id="TF313411"/>
<dbReference type="Reactome" id="R-BTA-964975">
    <property type="pathway name" value="Vitamin B6 activation to pyridoxal phosphate"/>
</dbReference>
<dbReference type="UniPathway" id="UPA01068">
    <property type="reaction ID" value="UER00304"/>
</dbReference>
<dbReference type="UniPathway" id="UPA01068">
    <property type="reaction ID" value="UER00305"/>
</dbReference>
<dbReference type="Proteomes" id="UP000009136">
    <property type="component" value="Chromosome 19"/>
</dbReference>
<dbReference type="Bgee" id="ENSBTAG00000012259">
    <property type="expression patterns" value="Expressed in liver and 104 other cell types or tissues"/>
</dbReference>
<dbReference type="GO" id="GO:0005829">
    <property type="term" value="C:cytosol"/>
    <property type="evidence" value="ECO:0007669"/>
    <property type="project" value="Ensembl"/>
</dbReference>
<dbReference type="GO" id="GO:0010181">
    <property type="term" value="F:FMN binding"/>
    <property type="evidence" value="ECO:0007669"/>
    <property type="project" value="Ensembl"/>
</dbReference>
<dbReference type="GO" id="GO:0042803">
    <property type="term" value="F:protein homodimerization activity"/>
    <property type="evidence" value="ECO:0007669"/>
    <property type="project" value="Ensembl"/>
</dbReference>
<dbReference type="GO" id="GO:0030170">
    <property type="term" value="F:pyridoxal phosphate binding"/>
    <property type="evidence" value="ECO:0007669"/>
    <property type="project" value="Ensembl"/>
</dbReference>
<dbReference type="GO" id="GO:0004733">
    <property type="term" value="F:pyridoxamine phosphate oxidase activity"/>
    <property type="evidence" value="ECO:0000250"/>
    <property type="project" value="UniProtKB"/>
</dbReference>
<dbReference type="GO" id="GO:0042823">
    <property type="term" value="P:pyridoxal phosphate biosynthetic process"/>
    <property type="evidence" value="ECO:0000318"/>
    <property type="project" value="GO_Central"/>
</dbReference>
<dbReference type="GO" id="GO:0042818">
    <property type="term" value="P:pyridoxamine metabolic process"/>
    <property type="evidence" value="ECO:0007669"/>
    <property type="project" value="Ensembl"/>
</dbReference>
<dbReference type="GO" id="GO:0008615">
    <property type="term" value="P:pyridoxine biosynthetic process"/>
    <property type="evidence" value="ECO:0007669"/>
    <property type="project" value="UniProtKB-KW"/>
</dbReference>
<dbReference type="FunFam" id="2.30.110.10:FF:000020">
    <property type="entry name" value="PNPO isoform 11"/>
    <property type="match status" value="1"/>
</dbReference>
<dbReference type="Gene3D" id="2.30.110.10">
    <property type="entry name" value="Electron Transport, Fmn-binding Protein, Chain A"/>
    <property type="match status" value="1"/>
</dbReference>
<dbReference type="HAMAP" id="MF_01629">
    <property type="entry name" value="PdxH"/>
    <property type="match status" value="1"/>
</dbReference>
<dbReference type="InterPro" id="IPR000659">
    <property type="entry name" value="Pyridox_Oxase"/>
</dbReference>
<dbReference type="InterPro" id="IPR019740">
    <property type="entry name" value="Pyridox_Oxase_CS"/>
</dbReference>
<dbReference type="InterPro" id="IPR011576">
    <property type="entry name" value="Pyridox_Oxase_N"/>
</dbReference>
<dbReference type="InterPro" id="IPR019576">
    <property type="entry name" value="Pyridoxamine_oxidase_dimer_C"/>
</dbReference>
<dbReference type="InterPro" id="IPR012349">
    <property type="entry name" value="Split_barrel_FMN-bd"/>
</dbReference>
<dbReference type="NCBIfam" id="TIGR00558">
    <property type="entry name" value="pdxH"/>
    <property type="match status" value="1"/>
</dbReference>
<dbReference type="NCBIfam" id="NF004231">
    <property type="entry name" value="PRK05679.1"/>
    <property type="match status" value="1"/>
</dbReference>
<dbReference type="PANTHER" id="PTHR10851:SF0">
    <property type="entry name" value="PYRIDOXINE-5'-PHOSPHATE OXIDASE"/>
    <property type="match status" value="1"/>
</dbReference>
<dbReference type="PANTHER" id="PTHR10851">
    <property type="entry name" value="PYRIDOXINE-5-PHOSPHATE OXIDASE"/>
    <property type="match status" value="1"/>
</dbReference>
<dbReference type="Pfam" id="PF10590">
    <property type="entry name" value="PNP_phzG_C"/>
    <property type="match status" value="1"/>
</dbReference>
<dbReference type="Pfam" id="PF01243">
    <property type="entry name" value="PNPOx_N"/>
    <property type="match status" value="1"/>
</dbReference>
<dbReference type="PIRSF" id="PIRSF000190">
    <property type="entry name" value="Pyd_amn-ph_oxd"/>
    <property type="match status" value="1"/>
</dbReference>
<dbReference type="SUPFAM" id="SSF50475">
    <property type="entry name" value="FMN-binding split barrel"/>
    <property type="match status" value="1"/>
</dbReference>
<dbReference type="PROSITE" id="PS01064">
    <property type="entry name" value="PYRIDOX_OXIDASE"/>
    <property type="match status" value="1"/>
</dbReference>
<accession>Q5E9K3</accession>
<evidence type="ECO:0000250" key="1">
    <source>
        <dbReference type="UniProtKB" id="P0AFI7"/>
    </source>
</evidence>
<evidence type="ECO:0000250" key="2">
    <source>
        <dbReference type="UniProtKB" id="Q9NVS9"/>
    </source>
</evidence>
<evidence type="ECO:0000305" key="3"/>
<sequence length="261" mass="30366">MIFWLRSVIVTFGRPAEWPRCLRHLCSRGAAMDLGPMRKTYRGDPEAFEETHLTSLDPVKQFAAWFEEAVQCPDIMEANAMCLATCTRDGKPSARMVLLKGFGKDGFRFFTNFESRKGKELDSNPFASLVFYWEPLHRQVRVEGPVKKLPEEEAECYFHSRPKSSQIGAVVSHQSSVIPDREYLRKKNKELEQLYQEQEVPKPKYWGGYILYPQVMEFWQGQTNRLHDRIVFRRGLLTGDSPLGPMTHRGEEDWVYERLAP</sequence>
<gene>
    <name type="primary">PNPO</name>
</gene>
<name>PNPO_BOVIN</name>
<comment type="function">
    <text evidence="2">Catalyzes the oxidation of either pyridoxine 5'-phosphate (PNP) or pyridoxamine 5'-phosphate (PMP) into pyridoxal 5'-phosphate (PLP).</text>
</comment>
<comment type="catalytic activity">
    <reaction evidence="2">
        <text>pyridoxamine 5'-phosphate + O2 + H2O = pyridoxal 5'-phosphate + H2O2 + NH4(+)</text>
        <dbReference type="Rhea" id="RHEA:15817"/>
        <dbReference type="ChEBI" id="CHEBI:15377"/>
        <dbReference type="ChEBI" id="CHEBI:15379"/>
        <dbReference type="ChEBI" id="CHEBI:16240"/>
        <dbReference type="ChEBI" id="CHEBI:28938"/>
        <dbReference type="ChEBI" id="CHEBI:58451"/>
        <dbReference type="ChEBI" id="CHEBI:597326"/>
        <dbReference type="EC" id="1.4.3.5"/>
    </reaction>
    <physiologicalReaction direction="left-to-right" evidence="2">
        <dbReference type="Rhea" id="RHEA:15818"/>
    </physiologicalReaction>
</comment>
<comment type="catalytic activity">
    <reaction evidence="2">
        <text>pyridoxine 5'-phosphate + O2 = pyridoxal 5'-phosphate + H2O2</text>
        <dbReference type="Rhea" id="RHEA:15149"/>
        <dbReference type="ChEBI" id="CHEBI:15379"/>
        <dbReference type="ChEBI" id="CHEBI:16240"/>
        <dbReference type="ChEBI" id="CHEBI:58589"/>
        <dbReference type="ChEBI" id="CHEBI:597326"/>
        <dbReference type="EC" id="1.4.3.5"/>
    </reaction>
    <physiologicalReaction direction="left-to-right" evidence="2">
        <dbReference type="Rhea" id="RHEA:15150"/>
    </physiologicalReaction>
</comment>
<comment type="cofactor">
    <cofactor evidence="2">
        <name>FMN</name>
        <dbReference type="ChEBI" id="CHEBI:58210"/>
    </cofactor>
    <text evidence="2">Binds 1 FMN per subunit.</text>
</comment>
<comment type="pathway">
    <text evidence="2">Cofactor metabolism; pyridoxal 5'-phosphate salvage; pyridoxal 5'-phosphate from pyridoxamine 5'-phosphate: step 1/1.</text>
</comment>
<comment type="pathway">
    <text evidence="2">Cofactor metabolism; pyridoxal 5'-phosphate salvage; pyridoxal 5'-phosphate from pyridoxine 5'-phosphate: step 1/1.</text>
</comment>
<comment type="subunit">
    <text evidence="2">Homodimer.</text>
</comment>
<comment type="similarity">
    <text evidence="3">Belongs to the pyridoxamine 5'-phosphate oxidase family.</text>
</comment>
<feature type="chain" id="PRO_0000167782" description="Pyridoxine-5'-phosphate oxidase">
    <location>
        <begin position="1"/>
        <end position="261"/>
    </location>
</feature>
<feature type="binding site" evidence="1">
    <location>
        <begin position="42"/>
        <end position="45"/>
    </location>
    <ligand>
        <name>pyridoxal 5'-phosphate</name>
        <dbReference type="ChEBI" id="CHEBI:597326"/>
    </ligand>
</feature>
<feature type="binding site" evidence="2">
    <location>
        <begin position="95"/>
        <end position="98"/>
    </location>
    <ligand>
        <name>FMN</name>
        <dbReference type="ChEBI" id="CHEBI:58210"/>
    </ligand>
</feature>
<feature type="binding site" evidence="2">
    <location>
        <position position="100"/>
    </location>
    <ligand>
        <name>pyridoxal 5'-phosphate</name>
        <dbReference type="ChEBI" id="CHEBI:597326"/>
    </ligand>
</feature>
<feature type="binding site" evidence="2">
    <location>
        <begin position="110"/>
        <end position="111"/>
    </location>
    <ligand>
        <name>FMN</name>
        <dbReference type="ChEBI" id="CHEBI:58210"/>
    </ligand>
</feature>
<feature type="binding site" evidence="2">
    <location>
        <begin position="116"/>
        <end position="117"/>
    </location>
    <ligand>
        <name>FMN</name>
        <dbReference type="ChEBI" id="CHEBI:58210"/>
    </ligand>
</feature>
<feature type="binding site" evidence="1">
    <location>
        <position position="139"/>
    </location>
    <ligand>
        <name>FMN</name>
        <dbReference type="ChEBI" id="CHEBI:58210"/>
    </ligand>
</feature>
<feature type="binding site" evidence="2">
    <location>
        <position position="157"/>
    </location>
    <ligand>
        <name>pyridoxal 5'-phosphate</name>
        <dbReference type="ChEBI" id="CHEBI:597326"/>
    </ligand>
</feature>
<feature type="binding site" evidence="2">
    <location>
        <position position="161"/>
    </location>
    <ligand>
        <name>pyridoxal 5'-phosphate</name>
        <dbReference type="ChEBI" id="CHEBI:597326"/>
    </ligand>
</feature>
<feature type="binding site" evidence="2">
    <location>
        <position position="165"/>
    </location>
    <ligand>
        <name>pyridoxal 5'-phosphate</name>
        <dbReference type="ChEBI" id="CHEBI:597326"/>
    </ligand>
</feature>
<feature type="binding site" evidence="2">
    <location>
        <begin position="174"/>
        <end position="175"/>
    </location>
    <ligand>
        <name>FMN</name>
        <dbReference type="ChEBI" id="CHEBI:58210"/>
    </ligand>
</feature>
<feature type="binding site" evidence="1">
    <location>
        <position position="219"/>
    </location>
    <ligand>
        <name>FMN</name>
        <dbReference type="ChEBI" id="CHEBI:58210"/>
    </ligand>
</feature>
<feature type="binding site" evidence="1">
    <location>
        <begin position="225"/>
        <end position="227"/>
    </location>
    <ligand>
        <name>pyridoxal 5'-phosphate</name>
        <dbReference type="ChEBI" id="CHEBI:597326"/>
    </ligand>
</feature>
<feature type="binding site" evidence="1">
    <location>
        <position position="229"/>
    </location>
    <ligand>
        <name>FMN</name>
        <dbReference type="ChEBI" id="CHEBI:58210"/>
    </ligand>
</feature>
<feature type="modified residue" description="Phosphothreonine" evidence="2">
    <location>
        <position position="238"/>
    </location>
</feature>
<feature type="modified residue" description="Phosphoserine" evidence="2">
    <location>
        <position position="241"/>
    </location>
</feature>
<organism>
    <name type="scientific">Bos taurus</name>
    <name type="common">Bovine</name>
    <dbReference type="NCBI Taxonomy" id="9913"/>
    <lineage>
        <taxon>Eukaryota</taxon>
        <taxon>Metazoa</taxon>
        <taxon>Chordata</taxon>
        <taxon>Craniata</taxon>
        <taxon>Vertebrata</taxon>
        <taxon>Euteleostomi</taxon>
        <taxon>Mammalia</taxon>
        <taxon>Eutheria</taxon>
        <taxon>Laurasiatheria</taxon>
        <taxon>Artiodactyla</taxon>
        <taxon>Ruminantia</taxon>
        <taxon>Pecora</taxon>
        <taxon>Bovidae</taxon>
        <taxon>Bovinae</taxon>
        <taxon>Bos</taxon>
    </lineage>
</organism>